<feature type="chain" id="PRO_0000336939" description="7-cyano-7-deazaguanine synthase">
    <location>
        <begin position="1"/>
        <end position="256"/>
    </location>
</feature>
<feature type="region of interest" description="Disordered" evidence="2">
    <location>
        <begin position="1"/>
        <end position="22"/>
    </location>
</feature>
<feature type="compositionally biased region" description="Polar residues" evidence="2">
    <location>
        <begin position="8"/>
        <end position="22"/>
    </location>
</feature>
<feature type="binding site" evidence="1">
    <location>
        <begin position="30"/>
        <end position="40"/>
    </location>
    <ligand>
        <name>ATP</name>
        <dbReference type="ChEBI" id="CHEBI:30616"/>
    </ligand>
</feature>
<feature type="binding site" evidence="1">
    <location>
        <position position="220"/>
    </location>
    <ligand>
        <name>Zn(2+)</name>
        <dbReference type="ChEBI" id="CHEBI:29105"/>
    </ligand>
</feature>
<feature type="binding site" evidence="1">
    <location>
        <position position="230"/>
    </location>
    <ligand>
        <name>Zn(2+)</name>
        <dbReference type="ChEBI" id="CHEBI:29105"/>
    </ligand>
</feature>
<feature type="binding site" evidence="1">
    <location>
        <position position="233"/>
    </location>
    <ligand>
        <name>Zn(2+)</name>
        <dbReference type="ChEBI" id="CHEBI:29105"/>
    </ligand>
</feature>
<feature type="binding site" evidence="1">
    <location>
        <position position="236"/>
    </location>
    <ligand>
        <name>Zn(2+)</name>
        <dbReference type="ChEBI" id="CHEBI:29105"/>
    </ligand>
</feature>
<gene>
    <name evidence="1" type="primary">queC</name>
    <name type="ordered locus">PsycPRwf_1766</name>
</gene>
<proteinExistence type="inferred from homology"/>
<evidence type="ECO:0000255" key="1">
    <source>
        <dbReference type="HAMAP-Rule" id="MF_01633"/>
    </source>
</evidence>
<evidence type="ECO:0000256" key="2">
    <source>
        <dbReference type="SAM" id="MobiDB-lite"/>
    </source>
</evidence>
<accession>A5WGB5</accession>
<keyword id="KW-0067">ATP-binding</keyword>
<keyword id="KW-0436">Ligase</keyword>
<keyword id="KW-0479">Metal-binding</keyword>
<keyword id="KW-0547">Nucleotide-binding</keyword>
<keyword id="KW-0671">Queuosine biosynthesis</keyword>
<keyword id="KW-0862">Zinc</keyword>
<dbReference type="EC" id="6.3.4.20" evidence="1"/>
<dbReference type="EMBL" id="CP000713">
    <property type="protein sequence ID" value="ABQ94706.1"/>
    <property type="molecule type" value="Genomic_DNA"/>
</dbReference>
<dbReference type="SMR" id="A5WGB5"/>
<dbReference type="STRING" id="349106.PsycPRwf_1766"/>
<dbReference type="KEGG" id="prw:PsycPRwf_1766"/>
<dbReference type="eggNOG" id="COG0603">
    <property type="taxonomic scope" value="Bacteria"/>
</dbReference>
<dbReference type="HOGENOM" id="CLU_081854_1_0_6"/>
<dbReference type="UniPathway" id="UPA00391"/>
<dbReference type="GO" id="GO:0005524">
    <property type="term" value="F:ATP binding"/>
    <property type="evidence" value="ECO:0007669"/>
    <property type="project" value="UniProtKB-UniRule"/>
</dbReference>
<dbReference type="GO" id="GO:0016879">
    <property type="term" value="F:ligase activity, forming carbon-nitrogen bonds"/>
    <property type="evidence" value="ECO:0007669"/>
    <property type="project" value="UniProtKB-UniRule"/>
</dbReference>
<dbReference type="GO" id="GO:0008270">
    <property type="term" value="F:zinc ion binding"/>
    <property type="evidence" value="ECO:0007669"/>
    <property type="project" value="UniProtKB-UniRule"/>
</dbReference>
<dbReference type="GO" id="GO:0008616">
    <property type="term" value="P:queuosine biosynthetic process"/>
    <property type="evidence" value="ECO:0007669"/>
    <property type="project" value="UniProtKB-UniRule"/>
</dbReference>
<dbReference type="CDD" id="cd01995">
    <property type="entry name" value="QueC-like"/>
    <property type="match status" value="1"/>
</dbReference>
<dbReference type="Gene3D" id="3.40.50.620">
    <property type="entry name" value="HUPs"/>
    <property type="match status" value="1"/>
</dbReference>
<dbReference type="HAMAP" id="MF_01633">
    <property type="entry name" value="QueC"/>
    <property type="match status" value="1"/>
</dbReference>
<dbReference type="InterPro" id="IPR018317">
    <property type="entry name" value="QueC"/>
</dbReference>
<dbReference type="InterPro" id="IPR014729">
    <property type="entry name" value="Rossmann-like_a/b/a_fold"/>
</dbReference>
<dbReference type="NCBIfam" id="TIGR00364">
    <property type="entry name" value="7-cyano-7-deazaguanine synthase QueC"/>
    <property type="match status" value="1"/>
</dbReference>
<dbReference type="PANTHER" id="PTHR42914">
    <property type="entry name" value="7-CYANO-7-DEAZAGUANINE SYNTHASE"/>
    <property type="match status" value="1"/>
</dbReference>
<dbReference type="PANTHER" id="PTHR42914:SF1">
    <property type="entry name" value="7-CYANO-7-DEAZAGUANINE SYNTHASE"/>
    <property type="match status" value="1"/>
</dbReference>
<dbReference type="Pfam" id="PF06508">
    <property type="entry name" value="QueC"/>
    <property type="match status" value="1"/>
</dbReference>
<dbReference type="PIRSF" id="PIRSF006293">
    <property type="entry name" value="ExsB"/>
    <property type="match status" value="1"/>
</dbReference>
<dbReference type="SUPFAM" id="SSF52402">
    <property type="entry name" value="Adenine nucleotide alpha hydrolases-like"/>
    <property type="match status" value="1"/>
</dbReference>
<name>QUEC_PSYWF</name>
<reference key="1">
    <citation type="submission" date="2007-05" db="EMBL/GenBank/DDBJ databases">
        <title>Complete sequence of chromosome of Psychrobacter sp. PRwf-1.</title>
        <authorList>
            <consortium name="US DOE Joint Genome Institute"/>
            <person name="Copeland A."/>
            <person name="Lucas S."/>
            <person name="Lapidus A."/>
            <person name="Barry K."/>
            <person name="Detter J.C."/>
            <person name="Glavina del Rio T."/>
            <person name="Hammon N."/>
            <person name="Israni S."/>
            <person name="Dalin E."/>
            <person name="Tice H."/>
            <person name="Pitluck S."/>
            <person name="Chain P."/>
            <person name="Malfatti S."/>
            <person name="Shin M."/>
            <person name="Vergez L."/>
            <person name="Schmutz J."/>
            <person name="Larimer F."/>
            <person name="Land M."/>
            <person name="Hauser L."/>
            <person name="Kyrpides N."/>
            <person name="Kim E."/>
            <person name="Tiedje J."/>
            <person name="Richardson P."/>
        </authorList>
    </citation>
    <scope>NUCLEOTIDE SEQUENCE [LARGE SCALE GENOMIC DNA]</scope>
    <source>
        <strain>PRwf-1</strain>
    </source>
</reference>
<organism>
    <name type="scientific">Psychrobacter sp. (strain PRwf-1)</name>
    <dbReference type="NCBI Taxonomy" id="349106"/>
    <lineage>
        <taxon>Bacteria</taxon>
        <taxon>Pseudomonadati</taxon>
        <taxon>Pseudomonadota</taxon>
        <taxon>Gammaproteobacteria</taxon>
        <taxon>Moraxellales</taxon>
        <taxon>Moraxellaceae</taxon>
        <taxon>Psychrobacter</taxon>
    </lineage>
</organism>
<protein>
    <recommendedName>
        <fullName evidence="1">7-cyano-7-deazaguanine synthase</fullName>
        <ecNumber evidence="1">6.3.4.20</ecNumber>
    </recommendedName>
    <alternativeName>
        <fullName evidence="1">7-cyano-7-carbaguanine synthase</fullName>
    </alternativeName>
    <alternativeName>
        <fullName evidence="1">PreQ(0) synthase</fullName>
    </alternativeName>
    <alternativeName>
        <fullName evidence="1">Queuosine biosynthesis protein QueC</fullName>
    </alternativeName>
</protein>
<sequence>MTDASADALTSPSNSGASQDTSQQNAVVLLSGGLDSVTCLYWAKARYAKVTAVSFNYGQRHNSELVAAKSIAGQAGVNHKIIDIDIAQLGGSSLTDHDMTVPDGDADKFPTHTDDIDNQAIPNTYVPARNTIFLSYALAVAEVTDANHIVIGVSSVDYSGYPDCRPEYIEAFEVMANLATKAGVTGHKLHIQTPLQKLSKAQTIQLGNSLGVDYSQTISCYKADSEGRACGICDSCTLRKRGFSDAGLADPTRYAG</sequence>
<comment type="function">
    <text evidence="1">Catalyzes the ATP-dependent conversion of 7-carboxy-7-deazaguanine (CDG) to 7-cyano-7-deazaguanine (preQ(0)).</text>
</comment>
<comment type="catalytic activity">
    <reaction evidence="1">
        <text>7-carboxy-7-deazaguanine + NH4(+) + ATP = 7-cyano-7-deazaguanine + ADP + phosphate + H2O + H(+)</text>
        <dbReference type="Rhea" id="RHEA:27982"/>
        <dbReference type="ChEBI" id="CHEBI:15377"/>
        <dbReference type="ChEBI" id="CHEBI:15378"/>
        <dbReference type="ChEBI" id="CHEBI:28938"/>
        <dbReference type="ChEBI" id="CHEBI:30616"/>
        <dbReference type="ChEBI" id="CHEBI:43474"/>
        <dbReference type="ChEBI" id="CHEBI:45075"/>
        <dbReference type="ChEBI" id="CHEBI:61036"/>
        <dbReference type="ChEBI" id="CHEBI:456216"/>
        <dbReference type="EC" id="6.3.4.20"/>
    </reaction>
</comment>
<comment type="cofactor">
    <cofactor evidence="1">
        <name>Zn(2+)</name>
        <dbReference type="ChEBI" id="CHEBI:29105"/>
    </cofactor>
    <text evidence="1">Binds 1 zinc ion per subunit.</text>
</comment>
<comment type="pathway">
    <text evidence="1">Purine metabolism; 7-cyano-7-deazaguanine biosynthesis.</text>
</comment>
<comment type="similarity">
    <text evidence="1">Belongs to the QueC family.</text>
</comment>